<accession>Q5ZLN8</accession>
<sequence>MEAVTEGGWSSLPVALSPGVLRALQDLGFDRMTPVQSATIPLFMSNKDVAAEAVTGSGKTLAFVIPILEILLRREEKLKKMQVGAIIITPTRELAIQIDEVLTHFTKHFPKFSQILLIGGRNPMEDVEKFKEHGGNIIVATPGRLEDLFRRKADGLDLASCVKSLDVLVLDEADRLLDMGFESSLNAILAFLPKQRRTGLFSATQTQEVENLVRAGLRNPVRISVKEKGVAATNTQKTPTRLENYYMICKADEKFNQLVHFLRQHKQEKHLVFFSTCACVEYYGKALESLIKQVKIMCIHGKMKHKRNKIFTEFRRLAGGILVCTDVMARGIDIPEVHWVLQYDPPSSASAFVHRCGRTARIGNAGSALVFLLPMEESYINFLSINQKCPMQEMQPQRNVLDLLPKLKSMALADRAVFEKGMKAFVSYIQAYAKHECNLIFRIKDLDFASLAKGFALLKMPKMPELRGKCFPDFTPVTVNTDSIPFKDKNREKQRQKQLEQQRKEREESEGKKKFIKNKSWSKQKAKREKKRKLTAKRKREEGSDMEDEDMEELLNDTRLLKRLKKGKISEEEFEKRLTGSQSKFKEAAAD</sequence>
<proteinExistence type="evidence at transcript level"/>
<comment type="function">
    <text evidence="1">Probable ATP-binding RNA helicase. Has ATPase activity and is involved in the maturation of precursor large subunit rRNAs (By similarity).</text>
</comment>
<comment type="catalytic activity">
    <reaction evidence="1">
        <text>ATP + H2O = ADP + phosphate + H(+)</text>
        <dbReference type="Rhea" id="RHEA:13065"/>
        <dbReference type="ChEBI" id="CHEBI:15377"/>
        <dbReference type="ChEBI" id="CHEBI:15378"/>
        <dbReference type="ChEBI" id="CHEBI:30616"/>
        <dbReference type="ChEBI" id="CHEBI:43474"/>
        <dbReference type="ChEBI" id="CHEBI:456216"/>
        <dbReference type="EC" id="3.6.4.13"/>
    </reaction>
</comment>
<comment type="subunit">
    <text evidence="1">Interacts with 28S rRNA. Interacts with double-stranded RNA substrates in vitro; the interaction stimulates ATPase activity.</text>
</comment>
<comment type="subcellular location">
    <subcellularLocation>
        <location evidence="1">Nucleus</location>
        <location evidence="1">Nucleoplasm</location>
    </subcellularLocation>
</comment>
<comment type="domain">
    <text>The Q motif is unique to and characteristic of the DEAD box family of RNA helicases and controls ATP binding and hydrolysis.</text>
</comment>
<comment type="domain">
    <text evidence="1">The C-terminal region is required for DDX55 nuclear import and association with pre-ribosomal complexes.</text>
</comment>
<comment type="similarity">
    <text evidence="6">Belongs to the DEAD box helicase family. DDX55/SPB4 subfamily.</text>
</comment>
<organism>
    <name type="scientific">Gallus gallus</name>
    <name type="common">Chicken</name>
    <dbReference type="NCBI Taxonomy" id="9031"/>
    <lineage>
        <taxon>Eukaryota</taxon>
        <taxon>Metazoa</taxon>
        <taxon>Chordata</taxon>
        <taxon>Craniata</taxon>
        <taxon>Vertebrata</taxon>
        <taxon>Euteleostomi</taxon>
        <taxon>Archelosauria</taxon>
        <taxon>Archosauria</taxon>
        <taxon>Dinosauria</taxon>
        <taxon>Saurischia</taxon>
        <taxon>Theropoda</taxon>
        <taxon>Coelurosauria</taxon>
        <taxon>Aves</taxon>
        <taxon>Neognathae</taxon>
        <taxon>Galloanserae</taxon>
        <taxon>Galliformes</taxon>
        <taxon>Phasianidae</taxon>
        <taxon>Phasianinae</taxon>
        <taxon>Gallus</taxon>
    </lineage>
</organism>
<dbReference type="EC" id="3.6.4.13" evidence="1"/>
<dbReference type="EMBL" id="AJ719696">
    <property type="protein sequence ID" value="CAG31355.1"/>
    <property type="molecule type" value="mRNA"/>
</dbReference>
<dbReference type="RefSeq" id="NP_001006185.1">
    <property type="nucleotide sequence ID" value="NM_001006185.1"/>
</dbReference>
<dbReference type="SMR" id="Q5ZLN8"/>
<dbReference type="FunCoup" id="Q5ZLN8">
    <property type="interactions" value="2651"/>
</dbReference>
<dbReference type="STRING" id="9031.ENSGALP00000005215"/>
<dbReference type="PaxDb" id="9031-ENSGALP00000005215"/>
<dbReference type="GeneID" id="416820"/>
<dbReference type="KEGG" id="gga:416820"/>
<dbReference type="CTD" id="57696"/>
<dbReference type="VEuPathDB" id="HostDB:geneid_416820"/>
<dbReference type="eggNOG" id="KOG0345">
    <property type="taxonomic scope" value="Eukaryota"/>
</dbReference>
<dbReference type="InParanoid" id="Q5ZLN8"/>
<dbReference type="OMA" id="AYKEHEC"/>
<dbReference type="OrthoDB" id="7396459at2759"/>
<dbReference type="PhylomeDB" id="Q5ZLN8"/>
<dbReference type="PRO" id="PR:Q5ZLN8"/>
<dbReference type="Proteomes" id="UP000000539">
    <property type="component" value="Unassembled WGS sequence"/>
</dbReference>
<dbReference type="GO" id="GO:0005730">
    <property type="term" value="C:nucleolus"/>
    <property type="evidence" value="ECO:0000318"/>
    <property type="project" value="GO_Central"/>
</dbReference>
<dbReference type="GO" id="GO:0005524">
    <property type="term" value="F:ATP binding"/>
    <property type="evidence" value="ECO:0007669"/>
    <property type="project" value="UniProtKB-KW"/>
</dbReference>
<dbReference type="GO" id="GO:0016887">
    <property type="term" value="F:ATP hydrolysis activity"/>
    <property type="evidence" value="ECO:0007669"/>
    <property type="project" value="RHEA"/>
</dbReference>
<dbReference type="GO" id="GO:0003723">
    <property type="term" value="F:RNA binding"/>
    <property type="evidence" value="ECO:0007669"/>
    <property type="project" value="UniProtKB-KW"/>
</dbReference>
<dbReference type="GO" id="GO:0003724">
    <property type="term" value="F:RNA helicase activity"/>
    <property type="evidence" value="ECO:0007669"/>
    <property type="project" value="UniProtKB-EC"/>
</dbReference>
<dbReference type="CDD" id="cd17960">
    <property type="entry name" value="DEADc_DDX55"/>
    <property type="match status" value="1"/>
</dbReference>
<dbReference type="CDD" id="cd18787">
    <property type="entry name" value="SF2_C_DEAD"/>
    <property type="match status" value="1"/>
</dbReference>
<dbReference type="FunFam" id="3.40.50.300:FF:000877">
    <property type="entry name" value="RNA helicase"/>
    <property type="match status" value="1"/>
</dbReference>
<dbReference type="FunFam" id="3.40.50.300:FF:001022">
    <property type="entry name" value="RNA helicase"/>
    <property type="match status" value="1"/>
</dbReference>
<dbReference type="Gene3D" id="3.40.50.300">
    <property type="entry name" value="P-loop containing nucleotide triphosphate hydrolases"/>
    <property type="match status" value="2"/>
</dbReference>
<dbReference type="InterPro" id="IPR011545">
    <property type="entry name" value="DEAD/DEAH_box_helicase_dom"/>
</dbReference>
<dbReference type="InterPro" id="IPR014001">
    <property type="entry name" value="Helicase_ATP-bd"/>
</dbReference>
<dbReference type="InterPro" id="IPR001650">
    <property type="entry name" value="Helicase_C-like"/>
</dbReference>
<dbReference type="InterPro" id="IPR027417">
    <property type="entry name" value="P-loop_NTPase"/>
</dbReference>
<dbReference type="InterPro" id="IPR000629">
    <property type="entry name" value="RNA-helicase_DEAD-box_CS"/>
</dbReference>
<dbReference type="InterPro" id="IPR014014">
    <property type="entry name" value="RNA_helicase_DEAD_Q_motif"/>
</dbReference>
<dbReference type="InterPro" id="IPR025313">
    <property type="entry name" value="SPB4-like_CTE"/>
</dbReference>
<dbReference type="PANTHER" id="PTHR24031">
    <property type="entry name" value="RNA HELICASE"/>
    <property type="match status" value="1"/>
</dbReference>
<dbReference type="Pfam" id="PF13959">
    <property type="entry name" value="CTE_SPB4"/>
    <property type="match status" value="1"/>
</dbReference>
<dbReference type="Pfam" id="PF00270">
    <property type="entry name" value="DEAD"/>
    <property type="match status" value="1"/>
</dbReference>
<dbReference type="Pfam" id="PF00271">
    <property type="entry name" value="Helicase_C"/>
    <property type="match status" value="1"/>
</dbReference>
<dbReference type="SMART" id="SM00487">
    <property type="entry name" value="DEXDc"/>
    <property type="match status" value="1"/>
</dbReference>
<dbReference type="SMART" id="SM01178">
    <property type="entry name" value="DUF4217"/>
    <property type="match status" value="1"/>
</dbReference>
<dbReference type="SMART" id="SM00490">
    <property type="entry name" value="HELICc"/>
    <property type="match status" value="1"/>
</dbReference>
<dbReference type="SUPFAM" id="SSF52540">
    <property type="entry name" value="P-loop containing nucleoside triphosphate hydrolases"/>
    <property type="match status" value="1"/>
</dbReference>
<dbReference type="PROSITE" id="PS00039">
    <property type="entry name" value="DEAD_ATP_HELICASE"/>
    <property type="match status" value="1"/>
</dbReference>
<dbReference type="PROSITE" id="PS51192">
    <property type="entry name" value="HELICASE_ATP_BIND_1"/>
    <property type="match status" value="1"/>
</dbReference>
<dbReference type="PROSITE" id="PS51194">
    <property type="entry name" value="HELICASE_CTER"/>
    <property type="match status" value="1"/>
</dbReference>
<dbReference type="PROSITE" id="PS51195">
    <property type="entry name" value="Q_MOTIF"/>
    <property type="match status" value="1"/>
</dbReference>
<keyword id="KW-0067">ATP-binding</keyword>
<keyword id="KW-0175">Coiled coil</keyword>
<keyword id="KW-0347">Helicase</keyword>
<keyword id="KW-0378">Hydrolase</keyword>
<keyword id="KW-0547">Nucleotide-binding</keyword>
<keyword id="KW-0539">Nucleus</keyword>
<keyword id="KW-1185">Reference proteome</keyword>
<keyword id="KW-0690">Ribosome biogenesis</keyword>
<keyword id="KW-0694">RNA-binding</keyword>
<keyword id="KW-0698">rRNA processing</keyword>
<keyword id="KW-0699">rRNA-binding</keyword>
<gene>
    <name type="primary">DDX55</name>
    <name type="ORF">RCJMB04_5g4</name>
</gene>
<evidence type="ECO:0000250" key="1">
    <source>
        <dbReference type="UniProtKB" id="Q8NHQ9"/>
    </source>
</evidence>
<evidence type="ECO:0000255" key="2"/>
<evidence type="ECO:0000255" key="3">
    <source>
        <dbReference type="PROSITE-ProRule" id="PRU00541"/>
    </source>
</evidence>
<evidence type="ECO:0000255" key="4">
    <source>
        <dbReference type="PROSITE-ProRule" id="PRU00542"/>
    </source>
</evidence>
<evidence type="ECO:0000256" key="5">
    <source>
        <dbReference type="SAM" id="MobiDB-lite"/>
    </source>
</evidence>
<evidence type="ECO:0000305" key="6"/>
<name>DDX55_CHICK</name>
<feature type="chain" id="PRO_0000252212" description="ATP-dependent RNA helicase DDX55">
    <location>
        <begin position="1"/>
        <end position="591"/>
    </location>
</feature>
<feature type="domain" description="Helicase ATP-binding" evidence="3">
    <location>
        <begin position="40"/>
        <end position="223"/>
    </location>
</feature>
<feature type="domain" description="Helicase C-terminal" evidence="4">
    <location>
        <begin position="254"/>
        <end position="402"/>
    </location>
</feature>
<feature type="region of interest" description="Disordered" evidence="5">
    <location>
        <begin position="482"/>
        <end position="559"/>
    </location>
</feature>
<feature type="region of interest" description="Important for nuclear localization" evidence="1">
    <location>
        <begin position="533"/>
        <end position="562"/>
    </location>
</feature>
<feature type="region of interest" description="Disordered" evidence="5">
    <location>
        <begin position="571"/>
        <end position="591"/>
    </location>
</feature>
<feature type="coiled-coil region" evidence="2">
    <location>
        <begin position="486"/>
        <end position="542"/>
    </location>
</feature>
<feature type="short sequence motif" description="Q motif">
    <location>
        <begin position="9"/>
        <end position="37"/>
    </location>
</feature>
<feature type="short sequence motif" description="DEAD box">
    <location>
        <begin position="171"/>
        <end position="174"/>
    </location>
</feature>
<feature type="compositionally biased region" description="Basic and acidic residues" evidence="5">
    <location>
        <begin position="485"/>
        <end position="513"/>
    </location>
</feature>
<feature type="compositionally biased region" description="Basic residues" evidence="5">
    <location>
        <begin position="514"/>
        <end position="538"/>
    </location>
</feature>
<feature type="compositionally biased region" description="Acidic residues" evidence="5">
    <location>
        <begin position="544"/>
        <end position="555"/>
    </location>
</feature>
<feature type="binding site" evidence="3">
    <location>
        <begin position="53"/>
        <end position="60"/>
    </location>
    <ligand>
        <name>ATP</name>
        <dbReference type="ChEBI" id="CHEBI:30616"/>
    </ligand>
</feature>
<reference key="1">
    <citation type="journal article" date="2005" name="Genome Biol.">
        <title>Full-length cDNAs from chicken bursal lymphocytes to facilitate gene function analysis.</title>
        <authorList>
            <person name="Caldwell R.B."/>
            <person name="Kierzek A.M."/>
            <person name="Arakawa H."/>
            <person name="Bezzubov Y."/>
            <person name="Zaim J."/>
            <person name="Fiedler P."/>
            <person name="Kutter S."/>
            <person name="Blagodatski A."/>
            <person name="Kostovska D."/>
            <person name="Koter M."/>
            <person name="Plachy J."/>
            <person name="Carninci P."/>
            <person name="Hayashizaki Y."/>
            <person name="Buerstedde J.-M."/>
        </authorList>
    </citation>
    <scope>NUCLEOTIDE SEQUENCE [LARGE SCALE MRNA]</scope>
    <source>
        <strain>CB</strain>
        <tissue>Bursa of Fabricius</tissue>
    </source>
</reference>
<protein>
    <recommendedName>
        <fullName>ATP-dependent RNA helicase DDX55</fullName>
        <ecNumber evidence="1">3.6.4.13</ecNumber>
    </recommendedName>
    <alternativeName>
        <fullName>DEAD box protein 55</fullName>
    </alternativeName>
</protein>